<protein>
    <recommendedName>
        <fullName evidence="1">Cysteine--tRNA ligase</fullName>
        <ecNumber evidence="1">6.1.1.16</ecNumber>
    </recommendedName>
    <alternativeName>
        <fullName evidence="1">Cysteinyl-tRNA synthetase</fullName>
        <shortName evidence="1">CysRS</shortName>
    </alternativeName>
</protein>
<name>SYC_CORGL</name>
<accession>Q8NMD7</accession>
<proteinExistence type="inferred from homology"/>
<keyword id="KW-0030">Aminoacyl-tRNA synthetase</keyword>
<keyword id="KW-0067">ATP-binding</keyword>
<keyword id="KW-0963">Cytoplasm</keyword>
<keyword id="KW-0436">Ligase</keyword>
<keyword id="KW-0479">Metal-binding</keyword>
<keyword id="KW-0547">Nucleotide-binding</keyword>
<keyword id="KW-0648">Protein biosynthesis</keyword>
<keyword id="KW-1185">Reference proteome</keyword>
<keyword id="KW-0862">Zinc</keyword>
<reference key="1">
    <citation type="journal article" date="2003" name="Appl. Microbiol. Biotechnol.">
        <title>The Corynebacterium glutamicum genome: features and impacts on biotechnological processes.</title>
        <authorList>
            <person name="Ikeda M."/>
            <person name="Nakagawa S."/>
        </authorList>
    </citation>
    <scope>NUCLEOTIDE SEQUENCE [LARGE SCALE GENOMIC DNA]</scope>
    <source>
        <strain>ATCC 13032 / DSM 20300 / JCM 1318 / BCRC 11384 / CCUG 27702 / LMG 3730 / NBRC 12168 / NCIMB 10025 / NRRL B-2784 / 534</strain>
    </source>
</reference>
<reference key="2">
    <citation type="journal article" date="2003" name="J. Biotechnol.">
        <title>The complete Corynebacterium glutamicum ATCC 13032 genome sequence and its impact on the production of L-aspartate-derived amino acids and vitamins.</title>
        <authorList>
            <person name="Kalinowski J."/>
            <person name="Bathe B."/>
            <person name="Bartels D."/>
            <person name="Bischoff N."/>
            <person name="Bott M."/>
            <person name="Burkovski A."/>
            <person name="Dusch N."/>
            <person name="Eggeling L."/>
            <person name="Eikmanns B.J."/>
            <person name="Gaigalat L."/>
            <person name="Goesmann A."/>
            <person name="Hartmann M."/>
            <person name="Huthmacher K."/>
            <person name="Kraemer R."/>
            <person name="Linke B."/>
            <person name="McHardy A.C."/>
            <person name="Meyer F."/>
            <person name="Moeckel B."/>
            <person name="Pfefferle W."/>
            <person name="Puehler A."/>
            <person name="Rey D.A."/>
            <person name="Rueckert C."/>
            <person name="Rupp O."/>
            <person name="Sahm H."/>
            <person name="Wendisch V.F."/>
            <person name="Wiegraebe I."/>
            <person name="Tauch A."/>
        </authorList>
    </citation>
    <scope>NUCLEOTIDE SEQUENCE [LARGE SCALE GENOMIC DNA]</scope>
    <source>
        <strain>ATCC 13032 / DSM 20300 / JCM 1318 / BCRC 11384 / CCUG 27702 / LMG 3730 / NBRC 12168 / NCIMB 10025 / NRRL B-2784 / 534</strain>
    </source>
</reference>
<dbReference type="EC" id="6.1.1.16" evidence="1"/>
<dbReference type="EMBL" id="BA000036">
    <property type="protein sequence ID" value="BAC00035.1"/>
    <property type="molecule type" value="Genomic_DNA"/>
</dbReference>
<dbReference type="EMBL" id="BX927155">
    <property type="protein sequence ID" value="CAF21303.1"/>
    <property type="molecule type" value="Genomic_DNA"/>
</dbReference>
<dbReference type="RefSeq" id="NP_601841.1">
    <property type="nucleotide sequence ID" value="NC_003450.3"/>
</dbReference>
<dbReference type="RefSeq" id="WP_011015271.1">
    <property type="nucleotide sequence ID" value="NC_006958.1"/>
</dbReference>
<dbReference type="SMR" id="Q8NMD7"/>
<dbReference type="STRING" id="196627.cg2924"/>
<dbReference type="GeneID" id="1020589"/>
<dbReference type="KEGG" id="cgb:cg2924"/>
<dbReference type="KEGG" id="cgl:Cgl2641"/>
<dbReference type="PATRIC" id="fig|196627.13.peg.2577"/>
<dbReference type="eggNOG" id="COG0215">
    <property type="taxonomic scope" value="Bacteria"/>
</dbReference>
<dbReference type="HOGENOM" id="CLU_013528_0_1_11"/>
<dbReference type="OrthoDB" id="9815130at2"/>
<dbReference type="BioCyc" id="CORYNE:G18NG-12258-MONOMER"/>
<dbReference type="Proteomes" id="UP000000582">
    <property type="component" value="Chromosome"/>
</dbReference>
<dbReference type="Proteomes" id="UP000001009">
    <property type="component" value="Chromosome"/>
</dbReference>
<dbReference type="GO" id="GO:0005829">
    <property type="term" value="C:cytosol"/>
    <property type="evidence" value="ECO:0007669"/>
    <property type="project" value="TreeGrafter"/>
</dbReference>
<dbReference type="GO" id="GO:0005524">
    <property type="term" value="F:ATP binding"/>
    <property type="evidence" value="ECO:0007669"/>
    <property type="project" value="UniProtKB-UniRule"/>
</dbReference>
<dbReference type="GO" id="GO:0004817">
    <property type="term" value="F:cysteine-tRNA ligase activity"/>
    <property type="evidence" value="ECO:0007669"/>
    <property type="project" value="UniProtKB-UniRule"/>
</dbReference>
<dbReference type="GO" id="GO:0008270">
    <property type="term" value="F:zinc ion binding"/>
    <property type="evidence" value="ECO:0007669"/>
    <property type="project" value="UniProtKB-UniRule"/>
</dbReference>
<dbReference type="GO" id="GO:0006423">
    <property type="term" value="P:cysteinyl-tRNA aminoacylation"/>
    <property type="evidence" value="ECO:0007669"/>
    <property type="project" value="UniProtKB-UniRule"/>
</dbReference>
<dbReference type="CDD" id="cd00672">
    <property type="entry name" value="CysRS_core"/>
    <property type="match status" value="1"/>
</dbReference>
<dbReference type="FunFam" id="3.40.50.620:FF:000068">
    <property type="entry name" value="Cysteine--tRNA ligase"/>
    <property type="match status" value="1"/>
</dbReference>
<dbReference type="Gene3D" id="1.20.120.1910">
    <property type="entry name" value="Cysteine-tRNA ligase, C-terminal anti-codon recognition domain"/>
    <property type="match status" value="1"/>
</dbReference>
<dbReference type="Gene3D" id="3.40.50.620">
    <property type="entry name" value="HUPs"/>
    <property type="match status" value="1"/>
</dbReference>
<dbReference type="HAMAP" id="MF_00041">
    <property type="entry name" value="Cys_tRNA_synth"/>
    <property type="match status" value="1"/>
</dbReference>
<dbReference type="InterPro" id="IPR015803">
    <property type="entry name" value="Cys-tRNA-ligase"/>
</dbReference>
<dbReference type="InterPro" id="IPR015273">
    <property type="entry name" value="Cys-tRNA-synt_Ia_DALR"/>
</dbReference>
<dbReference type="InterPro" id="IPR024909">
    <property type="entry name" value="Cys-tRNA/MSH_ligase"/>
</dbReference>
<dbReference type="InterPro" id="IPR014729">
    <property type="entry name" value="Rossmann-like_a/b/a_fold"/>
</dbReference>
<dbReference type="InterPro" id="IPR032678">
    <property type="entry name" value="tRNA-synt_1_cat_dom"/>
</dbReference>
<dbReference type="InterPro" id="IPR009080">
    <property type="entry name" value="tRNAsynth_Ia_anticodon-bd"/>
</dbReference>
<dbReference type="NCBIfam" id="TIGR00435">
    <property type="entry name" value="cysS"/>
    <property type="match status" value="1"/>
</dbReference>
<dbReference type="PANTHER" id="PTHR10890:SF30">
    <property type="entry name" value="CYSTEINE--TRNA LIGASE"/>
    <property type="match status" value="1"/>
</dbReference>
<dbReference type="PANTHER" id="PTHR10890">
    <property type="entry name" value="CYSTEINYL-TRNA SYNTHETASE"/>
    <property type="match status" value="1"/>
</dbReference>
<dbReference type="Pfam" id="PF09190">
    <property type="entry name" value="DALR_2"/>
    <property type="match status" value="1"/>
</dbReference>
<dbReference type="Pfam" id="PF01406">
    <property type="entry name" value="tRNA-synt_1e"/>
    <property type="match status" value="1"/>
</dbReference>
<dbReference type="PRINTS" id="PR00983">
    <property type="entry name" value="TRNASYNTHCYS"/>
</dbReference>
<dbReference type="SMART" id="SM00840">
    <property type="entry name" value="DALR_2"/>
    <property type="match status" value="1"/>
</dbReference>
<dbReference type="SUPFAM" id="SSF47323">
    <property type="entry name" value="Anticodon-binding domain of a subclass of class I aminoacyl-tRNA synthetases"/>
    <property type="match status" value="1"/>
</dbReference>
<dbReference type="SUPFAM" id="SSF52374">
    <property type="entry name" value="Nucleotidylyl transferase"/>
    <property type="match status" value="1"/>
</dbReference>
<organism>
    <name type="scientific">Corynebacterium glutamicum (strain ATCC 13032 / DSM 20300 / JCM 1318 / BCRC 11384 / CCUG 27702 / LMG 3730 / NBRC 12168 / NCIMB 10025 / NRRL B-2784 / 534)</name>
    <dbReference type="NCBI Taxonomy" id="196627"/>
    <lineage>
        <taxon>Bacteria</taxon>
        <taxon>Bacillati</taxon>
        <taxon>Actinomycetota</taxon>
        <taxon>Actinomycetes</taxon>
        <taxon>Mycobacteriales</taxon>
        <taxon>Corynebacteriaceae</taxon>
        <taxon>Corynebacterium</taxon>
    </lineage>
</organism>
<feature type="chain" id="PRO_0000159388" description="Cysteine--tRNA ligase">
    <location>
        <begin position="1"/>
        <end position="460"/>
    </location>
</feature>
<feature type="short sequence motif" description="'HIGH' region">
    <location>
        <begin position="31"/>
        <end position="41"/>
    </location>
</feature>
<feature type="short sequence motif" description="'KMSKS' region">
    <location>
        <begin position="268"/>
        <end position="272"/>
    </location>
</feature>
<feature type="binding site" evidence="1">
    <location>
        <position position="29"/>
    </location>
    <ligand>
        <name>Zn(2+)</name>
        <dbReference type="ChEBI" id="CHEBI:29105"/>
    </ligand>
</feature>
<feature type="binding site" evidence="1">
    <location>
        <position position="212"/>
    </location>
    <ligand>
        <name>Zn(2+)</name>
        <dbReference type="ChEBI" id="CHEBI:29105"/>
    </ligand>
</feature>
<feature type="binding site" evidence="1">
    <location>
        <position position="237"/>
    </location>
    <ligand>
        <name>Zn(2+)</name>
        <dbReference type="ChEBI" id="CHEBI:29105"/>
    </ligand>
</feature>
<feature type="binding site" evidence="1">
    <location>
        <position position="241"/>
    </location>
    <ligand>
        <name>Zn(2+)</name>
        <dbReference type="ChEBI" id="CHEBI:29105"/>
    </ligand>
</feature>
<feature type="binding site" evidence="1">
    <location>
        <position position="271"/>
    </location>
    <ligand>
        <name>ATP</name>
        <dbReference type="ChEBI" id="CHEBI:30616"/>
    </ligand>
</feature>
<gene>
    <name evidence="1" type="primary">cysS</name>
    <name type="synonym">cysS1</name>
    <name type="ordered locus">Cgl2641</name>
    <name type="ordered locus">cg2924</name>
</gene>
<sequence length="460" mass="51047">MTLRIFDTGTRTLRDFKPVQPGHASVYLCGATPQSSPHIGHVRSAVAFDILRRWLMAKGLDVAFVRNVTDIDDKILTKASENGRPWWEWVSTYEREFTWTYNTLGVLPPSTEPRATGHVTQMIKYMQRLIDNGFAYAVDGSVYFDVAAWSKAEGSDYGSLSGNRVEDMEQGEPDNFGKRGPQDFALWKAAKPGEPSWPTPWGDGRPGWHLECSAMATYYLGEQFDIHCGGLDLQFPHHENEIAQAHAAGDKFANYWMHNHWVTMAGEKMSKSLGNVLAVPEMLKQVRPVELRYYLGSAHYRSVLEYSESALSEAAVGYRRIESFLERVGDVEVGEWTPGFEVAMDEDIAVPKALAEIHNAVREGNAALDKGDREAAEKLASSVRAMTGVLGFDPVEWGSDAGADGKADKALDVLISSELERRATARAEKNWAVADEVRDRLADAGIEVVDTADGATWKLQ</sequence>
<evidence type="ECO:0000255" key="1">
    <source>
        <dbReference type="HAMAP-Rule" id="MF_00041"/>
    </source>
</evidence>
<comment type="catalytic activity">
    <reaction evidence="1">
        <text>tRNA(Cys) + L-cysteine + ATP = L-cysteinyl-tRNA(Cys) + AMP + diphosphate</text>
        <dbReference type="Rhea" id="RHEA:17773"/>
        <dbReference type="Rhea" id="RHEA-COMP:9661"/>
        <dbReference type="Rhea" id="RHEA-COMP:9679"/>
        <dbReference type="ChEBI" id="CHEBI:30616"/>
        <dbReference type="ChEBI" id="CHEBI:33019"/>
        <dbReference type="ChEBI" id="CHEBI:35235"/>
        <dbReference type="ChEBI" id="CHEBI:78442"/>
        <dbReference type="ChEBI" id="CHEBI:78517"/>
        <dbReference type="ChEBI" id="CHEBI:456215"/>
        <dbReference type="EC" id="6.1.1.16"/>
    </reaction>
</comment>
<comment type="cofactor">
    <cofactor evidence="1">
        <name>Zn(2+)</name>
        <dbReference type="ChEBI" id="CHEBI:29105"/>
    </cofactor>
    <text evidence="1">Binds 1 zinc ion per subunit.</text>
</comment>
<comment type="subunit">
    <text evidence="1">Monomer.</text>
</comment>
<comment type="subcellular location">
    <subcellularLocation>
        <location evidence="1">Cytoplasm</location>
    </subcellularLocation>
</comment>
<comment type="similarity">
    <text evidence="1">Belongs to the class-I aminoacyl-tRNA synthetase family.</text>
</comment>